<reference key="1">
    <citation type="journal article" date="2009" name="Plant Mol. Biol.">
        <title>A PIP-family protein is required for biosynthesis of tobacco alkaloids.</title>
        <authorList>
            <person name="Kajikawa M."/>
            <person name="Hirai N."/>
            <person name="Hashimoto T."/>
        </authorList>
    </citation>
    <scope>NUCLEOTIDE SEQUENCE [GENOMIC DNA / MRNA]</scope>
    <scope>FUNCTION</scope>
    <scope>INDUCTION BY METHYL JASMONATE</scope>
    <scope>PATHWAY</scope>
    <source>
        <strain>cv. Petit Havana SR1</strain>
    </source>
</reference>
<reference key="2">
    <citation type="submission" date="2014-04" db="EMBL/GenBank/DDBJ databases">
        <title>Molecular cloning of isoflavone reductase-like gene family from tobacco.</title>
        <authorList>
            <person name="Chen W."/>
            <person name="Lin Y.-C."/>
            <person name="Gao W.-C."/>
            <person name="Li C.-J."/>
            <person name="Wang S.-G."/>
            <person name="Lu J."/>
            <person name="Chai Y.-R."/>
        </authorList>
    </citation>
    <scope>NUCLEOTIDE SEQUENCE [GENOMIC DNA / MRNA]</scope>
</reference>
<reference key="3">
    <citation type="journal article" date="2015" name="Mol. Genet. Genomics">
        <title>Current status and prospects for the study of Nicotiana genomics, genetics, and nicotine biosynthesis genes.</title>
        <authorList>
            <person name="Wang X."/>
            <person name="Bennetzen J.L."/>
        </authorList>
    </citation>
    <scope>REVIEW ON NICOTINE BIOSYNTHESIS</scope>
</reference>
<organism>
    <name type="scientific">Nicotiana tabacum</name>
    <name type="common">Common tobacco</name>
    <dbReference type="NCBI Taxonomy" id="4097"/>
    <lineage>
        <taxon>Eukaryota</taxon>
        <taxon>Viridiplantae</taxon>
        <taxon>Streptophyta</taxon>
        <taxon>Embryophyta</taxon>
        <taxon>Tracheophyta</taxon>
        <taxon>Spermatophyta</taxon>
        <taxon>Magnoliopsida</taxon>
        <taxon>eudicotyledons</taxon>
        <taxon>Gunneridae</taxon>
        <taxon>Pentapetalae</taxon>
        <taxon>asterids</taxon>
        <taxon>lamiids</taxon>
        <taxon>Solanales</taxon>
        <taxon>Solanaceae</taxon>
        <taxon>Nicotianoideae</taxon>
        <taxon>Nicotianeae</taxon>
        <taxon>Nicotiana</taxon>
    </lineage>
</organism>
<proteinExistence type="evidence at transcript level"/>
<feature type="chain" id="PRO_0000442616" description="Isoflavone reductase homolog A622-like">
    <location>
        <begin position="1"/>
        <end position="310"/>
    </location>
</feature>
<feature type="active site" description="Proton acceptor" evidence="2">
    <location>
        <position position="135"/>
    </location>
</feature>
<feature type="binding site" evidence="2">
    <location>
        <begin position="13"/>
        <end position="19"/>
    </location>
    <ligand>
        <name>NADP(+)</name>
        <dbReference type="ChEBI" id="CHEBI:58349"/>
    </ligand>
</feature>
<feature type="binding site" evidence="2">
    <location>
        <position position="38"/>
    </location>
    <ligand>
        <name>NADP(+)</name>
        <dbReference type="ChEBI" id="CHEBI:58349"/>
    </ligand>
</feature>
<feature type="binding site" evidence="2">
    <location>
        <position position="47"/>
    </location>
    <ligand>
        <name>NADP(+)</name>
        <dbReference type="ChEBI" id="CHEBI:58349"/>
    </ligand>
</feature>
<feature type="binding site" evidence="2">
    <location>
        <position position="139"/>
    </location>
    <ligand>
        <name>NADP(+)</name>
        <dbReference type="ChEBI" id="CHEBI:58349"/>
    </ligand>
</feature>
<accession>B6VRE6</accession>
<name>A622L_TOBAC</name>
<keyword id="KW-0017">Alkaloid metabolism</keyword>
<keyword id="KW-0963">Cytoplasm</keyword>
<keyword id="KW-0521">NADP</keyword>
<keyword id="KW-0560">Oxidoreductase</keyword>
<keyword id="KW-1185">Reference proteome</keyword>
<evidence type="ECO:0000250" key="1">
    <source>
        <dbReference type="UniProtKB" id="P52580"/>
    </source>
</evidence>
<evidence type="ECO:0000250" key="2">
    <source>
        <dbReference type="UniProtKB" id="Q9LD14"/>
    </source>
</evidence>
<evidence type="ECO:0000269" key="3">
    <source>
    </source>
</evidence>
<evidence type="ECO:0000303" key="4">
    <source>
    </source>
</evidence>
<evidence type="ECO:0000305" key="5"/>
<evidence type="ECO:0000312" key="6">
    <source>
        <dbReference type="EMBL" id="AII71785.1"/>
    </source>
</evidence>
<sequence>MVVSEKSKILIIGGTGYIGKYLVETSAKSGHPTFVLIRESTLVNPEKSKLIDTFKSYGVTLLFGDISNQESLLKAIKQVDVVISTVGGQQFADQVNIIKAIKEAGNIKRFLPSEFGFDVDHAHAIEPAASLFALKVKIRRMIEAEGIPYTYVICNWFADFFLPNLGQLEAKTPPRDKVVIFGDGNPKAIYVKEEDIATYTMKAVDDPRTLNKTLHMRPPANILSFNEIVSLWEEKIGKTLEKLYLSEEDILHIVQEGPMPLRVNLAICHSVFVNGDSANFEIQPSTGVEATELYPKVKYTTVDEYYNKFV</sequence>
<comment type="function">
    <text evidence="3">Involved in the biosynthesis of pyridine alkaloid natural products, leading mainly to the production of anabasine, anatabine, nicotine and nornicotine, effective deterrents against herbivores with antiparasitic and pesticide properties (neurotoxins); nornicotine serves as the precursor in the synthesis of the carcinogen compound N'-nitrosonornicotine (NNN) (PubMed:19002761). Reductase that may be involved in a late step of tobacco alkaloid biosynthesis (PubMed:19002761). Maybe involved in either the formation of a nicotinic acid-derived precursor or the final condensation reaction of tobacco alkaloids (PubMed:19002761).</text>
</comment>
<comment type="pathway">
    <text evidence="3">Alkaloid biosynthesis; nicotine biosynthesis.</text>
</comment>
<comment type="subunit">
    <text evidence="1">Monomer.</text>
</comment>
<comment type="subcellular location">
    <subcellularLocation>
        <location evidence="1">Cytoplasm</location>
    </subcellularLocation>
</comment>
<comment type="tissue specificity">
    <text evidence="3">Expressed in roots.</text>
</comment>
<comment type="induction">
    <text evidence="3">Induced by methyl jasmonate in roots.</text>
</comment>
<comment type="miscellaneous">
    <text evidence="3">Root cells silencing A622L exhibit inhibition of cell growth, severely decreased formation of several alkaloids, and accumulation of nicotinic acid beta-N-glucoside and N-methylpyrrolinium cation.</text>
</comment>
<comment type="similarity">
    <text evidence="5">Belongs to the NmrA-type oxidoreductase family. Isoflavone reductase subfamily.</text>
</comment>
<protein>
    <recommendedName>
        <fullName evidence="5">Isoflavone reductase homolog A622-like</fullName>
        <shortName evidence="4">NtA622L</shortName>
        <ecNumber evidence="5">1.3.1.-</ecNumber>
    </recommendedName>
</protein>
<gene>
    <name evidence="4" type="primary">A622L</name>
    <name evidence="6" type="synonym">IRL2</name>
</gene>
<dbReference type="EC" id="1.3.1.-" evidence="5"/>
<dbReference type="EMBL" id="AB445396">
    <property type="protein sequence ID" value="BAG84265.1"/>
    <property type="molecule type" value="mRNA"/>
</dbReference>
<dbReference type="EMBL" id="AB445397">
    <property type="protein sequence ID" value="BAG84266.1"/>
    <property type="molecule type" value="Genomic_DNA"/>
</dbReference>
<dbReference type="EMBL" id="KJ776597">
    <property type="protein sequence ID" value="AII71785.1"/>
    <property type="molecule type" value="Genomic_DNA"/>
</dbReference>
<dbReference type="EMBL" id="KJ776598">
    <property type="protein sequence ID" value="AII71786.1"/>
    <property type="molecule type" value="mRNA"/>
</dbReference>
<dbReference type="RefSeq" id="NP_001312742.1">
    <property type="nucleotide sequence ID" value="NM_001325813.1"/>
</dbReference>
<dbReference type="SMR" id="B6VRE6"/>
<dbReference type="STRING" id="4097.B6VRE6"/>
<dbReference type="PaxDb" id="4097-B6VRE6"/>
<dbReference type="ProMEX" id="B6VRE6"/>
<dbReference type="GeneID" id="107807959"/>
<dbReference type="KEGG" id="nta:107807959"/>
<dbReference type="OMA" id="HIANASC"/>
<dbReference type="OrthoDB" id="419598at2759"/>
<dbReference type="PhylomeDB" id="B6VRE6"/>
<dbReference type="UniPathway" id="UPA00107"/>
<dbReference type="Proteomes" id="UP000084051">
    <property type="component" value="Unplaced"/>
</dbReference>
<dbReference type="GO" id="GO:0005737">
    <property type="term" value="C:cytoplasm"/>
    <property type="evidence" value="ECO:0007669"/>
    <property type="project" value="UniProtKB-SubCell"/>
</dbReference>
<dbReference type="GO" id="GO:0016491">
    <property type="term" value="F:oxidoreductase activity"/>
    <property type="evidence" value="ECO:0007669"/>
    <property type="project" value="UniProtKB-KW"/>
</dbReference>
<dbReference type="GO" id="GO:0009820">
    <property type="term" value="P:alkaloid metabolic process"/>
    <property type="evidence" value="ECO:0007669"/>
    <property type="project" value="UniProtKB-KW"/>
</dbReference>
<dbReference type="GO" id="GO:0042179">
    <property type="term" value="P:nicotine biosynthetic process"/>
    <property type="evidence" value="ECO:0007669"/>
    <property type="project" value="UniProtKB-UniPathway"/>
</dbReference>
<dbReference type="GO" id="GO:0044550">
    <property type="term" value="P:secondary metabolite biosynthetic process"/>
    <property type="evidence" value="ECO:0000315"/>
    <property type="project" value="UniProtKB"/>
</dbReference>
<dbReference type="CDD" id="cd05259">
    <property type="entry name" value="PCBER_SDR_a"/>
    <property type="match status" value="1"/>
</dbReference>
<dbReference type="Gene3D" id="3.40.50.720">
    <property type="entry name" value="NAD(P)-binding Rossmann-like Domain"/>
    <property type="match status" value="1"/>
</dbReference>
<dbReference type="Gene3D" id="3.90.25.10">
    <property type="entry name" value="UDP-galactose 4-epimerase, domain 1"/>
    <property type="match status" value="1"/>
</dbReference>
<dbReference type="InterPro" id="IPR036291">
    <property type="entry name" value="NAD(P)-bd_dom_sf"/>
</dbReference>
<dbReference type="InterPro" id="IPR008030">
    <property type="entry name" value="NmrA-like"/>
</dbReference>
<dbReference type="InterPro" id="IPR050608">
    <property type="entry name" value="NmrA-type/Isoflavone_red_sf"/>
</dbReference>
<dbReference type="InterPro" id="IPR045312">
    <property type="entry name" value="PCBER-like"/>
</dbReference>
<dbReference type="PANTHER" id="PTHR43349:SF49">
    <property type="entry name" value="ISOFLAVONE REDUCTASE HOMOLOG A622"/>
    <property type="match status" value="1"/>
</dbReference>
<dbReference type="PANTHER" id="PTHR43349">
    <property type="entry name" value="PINORESINOL REDUCTASE-RELATED"/>
    <property type="match status" value="1"/>
</dbReference>
<dbReference type="Pfam" id="PF05368">
    <property type="entry name" value="NmrA"/>
    <property type="match status" value="1"/>
</dbReference>
<dbReference type="SUPFAM" id="SSF51735">
    <property type="entry name" value="NAD(P)-binding Rossmann-fold domains"/>
    <property type="match status" value="1"/>
</dbReference>